<protein>
    <recommendedName>
        <fullName evidence="1">3-phosphoshikimate 1-carboxyvinyltransferase</fullName>
        <ecNumber evidence="1">2.5.1.19</ecNumber>
    </recommendedName>
    <alternativeName>
        <fullName evidence="1">5-enolpyruvylshikimate-3-phosphate synthase</fullName>
        <shortName evidence="1">EPSP synthase</shortName>
        <shortName evidence="1">EPSPS</shortName>
    </alternativeName>
</protein>
<evidence type="ECO:0000255" key="1">
    <source>
        <dbReference type="HAMAP-Rule" id="MF_00210"/>
    </source>
</evidence>
<dbReference type="EC" id="2.5.1.19" evidence="1"/>
<dbReference type="EMBL" id="AE017262">
    <property type="protein sequence ID" value="AAT04722.1"/>
    <property type="molecule type" value="Genomic_DNA"/>
</dbReference>
<dbReference type="RefSeq" id="WP_003726519.1">
    <property type="nucleotide sequence ID" value="NC_002973.6"/>
</dbReference>
<dbReference type="SMR" id="Q71Y92"/>
<dbReference type="KEGG" id="lmf:LMOf2365_1952"/>
<dbReference type="HOGENOM" id="CLU_024321_0_1_9"/>
<dbReference type="UniPathway" id="UPA00053">
    <property type="reaction ID" value="UER00089"/>
</dbReference>
<dbReference type="GO" id="GO:0005737">
    <property type="term" value="C:cytoplasm"/>
    <property type="evidence" value="ECO:0007669"/>
    <property type="project" value="UniProtKB-SubCell"/>
</dbReference>
<dbReference type="GO" id="GO:0003866">
    <property type="term" value="F:3-phosphoshikimate 1-carboxyvinyltransferase activity"/>
    <property type="evidence" value="ECO:0007669"/>
    <property type="project" value="UniProtKB-UniRule"/>
</dbReference>
<dbReference type="GO" id="GO:0008652">
    <property type="term" value="P:amino acid biosynthetic process"/>
    <property type="evidence" value="ECO:0007669"/>
    <property type="project" value="UniProtKB-KW"/>
</dbReference>
<dbReference type="GO" id="GO:0009073">
    <property type="term" value="P:aromatic amino acid family biosynthetic process"/>
    <property type="evidence" value="ECO:0007669"/>
    <property type="project" value="UniProtKB-KW"/>
</dbReference>
<dbReference type="GO" id="GO:0009423">
    <property type="term" value="P:chorismate biosynthetic process"/>
    <property type="evidence" value="ECO:0007669"/>
    <property type="project" value="UniProtKB-UniRule"/>
</dbReference>
<dbReference type="CDD" id="cd01556">
    <property type="entry name" value="EPSP_synthase"/>
    <property type="match status" value="1"/>
</dbReference>
<dbReference type="FunFam" id="3.65.10.10:FF:000005">
    <property type="entry name" value="3-phosphoshikimate 1-carboxyvinyltransferase"/>
    <property type="match status" value="1"/>
</dbReference>
<dbReference type="FunFam" id="3.65.10.10:FF:000006">
    <property type="entry name" value="3-phosphoshikimate 1-carboxyvinyltransferase"/>
    <property type="match status" value="1"/>
</dbReference>
<dbReference type="Gene3D" id="3.65.10.10">
    <property type="entry name" value="Enolpyruvate transferase domain"/>
    <property type="match status" value="2"/>
</dbReference>
<dbReference type="HAMAP" id="MF_00210">
    <property type="entry name" value="EPSP_synth"/>
    <property type="match status" value="1"/>
</dbReference>
<dbReference type="InterPro" id="IPR001986">
    <property type="entry name" value="Enolpyruvate_Tfrase_dom"/>
</dbReference>
<dbReference type="InterPro" id="IPR036968">
    <property type="entry name" value="Enolpyruvate_Tfrase_sf"/>
</dbReference>
<dbReference type="InterPro" id="IPR006264">
    <property type="entry name" value="EPSP_synthase"/>
</dbReference>
<dbReference type="InterPro" id="IPR023193">
    <property type="entry name" value="EPSP_synthase_CS"/>
</dbReference>
<dbReference type="InterPro" id="IPR013792">
    <property type="entry name" value="RNA3'P_cycl/enolpyr_Trfase_a/b"/>
</dbReference>
<dbReference type="NCBIfam" id="TIGR01356">
    <property type="entry name" value="aroA"/>
    <property type="match status" value="1"/>
</dbReference>
<dbReference type="PANTHER" id="PTHR21090">
    <property type="entry name" value="AROM/DEHYDROQUINATE SYNTHASE"/>
    <property type="match status" value="1"/>
</dbReference>
<dbReference type="PANTHER" id="PTHR21090:SF5">
    <property type="entry name" value="PENTAFUNCTIONAL AROM POLYPEPTIDE"/>
    <property type="match status" value="1"/>
</dbReference>
<dbReference type="Pfam" id="PF00275">
    <property type="entry name" value="EPSP_synthase"/>
    <property type="match status" value="1"/>
</dbReference>
<dbReference type="PIRSF" id="PIRSF000505">
    <property type="entry name" value="EPSPS"/>
    <property type="match status" value="1"/>
</dbReference>
<dbReference type="SUPFAM" id="SSF55205">
    <property type="entry name" value="EPT/RTPC-like"/>
    <property type="match status" value="1"/>
</dbReference>
<dbReference type="PROSITE" id="PS00104">
    <property type="entry name" value="EPSP_SYNTHASE_1"/>
    <property type="match status" value="1"/>
</dbReference>
<dbReference type="PROSITE" id="PS00885">
    <property type="entry name" value="EPSP_SYNTHASE_2"/>
    <property type="match status" value="1"/>
</dbReference>
<organism>
    <name type="scientific">Listeria monocytogenes serotype 4b (strain F2365)</name>
    <dbReference type="NCBI Taxonomy" id="265669"/>
    <lineage>
        <taxon>Bacteria</taxon>
        <taxon>Bacillati</taxon>
        <taxon>Bacillota</taxon>
        <taxon>Bacilli</taxon>
        <taxon>Bacillales</taxon>
        <taxon>Listeriaceae</taxon>
        <taxon>Listeria</taxon>
    </lineage>
</organism>
<proteinExistence type="inferred from homology"/>
<reference key="1">
    <citation type="journal article" date="2004" name="Nucleic Acids Res.">
        <title>Whole genome comparisons of serotype 4b and 1/2a strains of the food-borne pathogen Listeria monocytogenes reveal new insights into the core genome components of this species.</title>
        <authorList>
            <person name="Nelson K.E."/>
            <person name="Fouts D.E."/>
            <person name="Mongodin E.F."/>
            <person name="Ravel J."/>
            <person name="DeBoy R.T."/>
            <person name="Kolonay J.F."/>
            <person name="Rasko D.A."/>
            <person name="Angiuoli S.V."/>
            <person name="Gill S.R."/>
            <person name="Paulsen I.T."/>
            <person name="Peterson J.D."/>
            <person name="White O."/>
            <person name="Nelson W.C."/>
            <person name="Nierman W.C."/>
            <person name="Beanan M.J."/>
            <person name="Brinkac L.M."/>
            <person name="Daugherty S.C."/>
            <person name="Dodson R.J."/>
            <person name="Durkin A.S."/>
            <person name="Madupu R."/>
            <person name="Haft D.H."/>
            <person name="Selengut J."/>
            <person name="Van Aken S.E."/>
            <person name="Khouri H.M."/>
            <person name="Fedorova N."/>
            <person name="Forberger H.A."/>
            <person name="Tran B."/>
            <person name="Kathariou S."/>
            <person name="Wonderling L.D."/>
            <person name="Uhlich G.A."/>
            <person name="Bayles D.O."/>
            <person name="Luchansky J.B."/>
            <person name="Fraser C.M."/>
        </authorList>
    </citation>
    <scope>NUCLEOTIDE SEQUENCE [LARGE SCALE GENOMIC DNA]</scope>
    <source>
        <strain>F2365</strain>
    </source>
</reference>
<feature type="chain" id="PRO_0000088269" description="3-phosphoshikimate 1-carboxyvinyltransferase">
    <location>
        <begin position="1"/>
        <end position="428"/>
    </location>
</feature>
<feature type="active site" description="Proton acceptor" evidence="1">
    <location>
        <position position="314"/>
    </location>
</feature>
<feature type="binding site" evidence="1">
    <location>
        <position position="20"/>
    </location>
    <ligand>
        <name>3-phosphoshikimate</name>
        <dbReference type="ChEBI" id="CHEBI:145989"/>
    </ligand>
</feature>
<feature type="binding site" evidence="1">
    <location>
        <position position="20"/>
    </location>
    <ligand>
        <name>phosphoenolpyruvate</name>
        <dbReference type="ChEBI" id="CHEBI:58702"/>
    </ligand>
</feature>
<feature type="binding site" evidence="1">
    <location>
        <position position="21"/>
    </location>
    <ligand>
        <name>3-phosphoshikimate</name>
        <dbReference type="ChEBI" id="CHEBI:145989"/>
    </ligand>
</feature>
<feature type="binding site" evidence="1">
    <location>
        <position position="25"/>
    </location>
    <ligand>
        <name>3-phosphoshikimate</name>
        <dbReference type="ChEBI" id="CHEBI:145989"/>
    </ligand>
</feature>
<feature type="binding site" evidence="1">
    <location>
        <position position="92"/>
    </location>
    <ligand>
        <name>phosphoenolpyruvate</name>
        <dbReference type="ChEBI" id="CHEBI:58702"/>
    </ligand>
</feature>
<feature type="binding site" evidence="1">
    <location>
        <position position="120"/>
    </location>
    <ligand>
        <name>phosphoenolpyruvate</name>
        <dbReference type="ChEBI" id="CHEBI:58702"/>
    </ligand>
</feature>
<feature type="binding site" evidence="1">
    <location>
        <position position="166"/>
    </location>
    <ligand>
        <name>3-phosphoshikimate</name>
        <dbReference type="ChEBI" id="CHEBI:145989"/>
    </ligand>
</feature>
<feature type="binding site" evidence="1">
    <location>
        <position position="168"/>
    </location>
    <ligand>
        <name>3-phosphoshikimate</name>
        <dbReference type="ChEBI" id="CHEBI:145989"/>
    </ligand>
</feature>
<feature type="binding site" evidence="1">
    <location>
        <position position="168"/>
    </location>
    <ligand>
        <name>phosphoenolpyruvate</name>
        <dbReference type="ChEBI" id="CHEBI:58702"/>
    </ligand>
</feature>
<feature type="binding site" evidence="1">
    <location>
        <position position="314"/>
    </location>
    <ligand>
        <name>3-phosphoshikimate</name>
        <dbReference type="ChEBI" id="CHEBI:145989"/>
    </ligand>
</feature>
<feature type="binding site" evidence="1">
    <location>
        <position position="341"/>
    </location>
    <ligand>
        <name>3-phosphoshikimate</name>
        <dbReference type="ChEBI" id="CHEBI:145989"/>
    </ligand>
</feature>
<feature type="binding site" evidence="1">
    <location>
        <position position="345"/>
    </location>
    <ligand>
        <name>phosphoenolpyruvate</name>
        <dbReference type="ChEBI" id="CHEBI:58702"/>
    </ligand>
</feature>
<feature type="binding site" evidence="1">
    <location>
        <position position="387"/>
    </location>
    <ligand>
        <name>phosphoenolpyruvate</name>
        <dbReference type="ChEBI" id="CHEBI:58702"/>
    </ligand>
</feature>
<gene>
    <name evidence="1" type="primary">aroA</name>
    <name type="ordered locus">LMOf2365_1952</name>
</gene>
<accession>Q71Y92</accession>
<name>AROA_LISMF</name>
<sequence>MKLITNKQGLVGAITVPGDKSMSHRSIMFGAIAEGKTVIRHFLRADDCLGTIKAFKALGVKIEETEEEIIVHGTGFDGLKQADGPLDIGNSGTTIRLMMGILAGRDFDTVILGDESIAKRPMNRVMLPLQQMGAKMHGKDGSEFAPITINGKQSLKRMEYHMPVASAQVKSAIIFAALQAEGETIIHEKEKTRDHTEHMIRQFGGEIEMDGLTIRVKGGQTFTGQEMTVPGDVSSAAFFIVAGLITPGSEIELTHVGLNPTRTGIFDVVEQMGGSLVVKDSSRSTGKLAGTVVVKTSDLKGTEIGGDIIPRLIDEIPVIALLATQAEGTTIIKDAAELKVKETNRIDAVATELNKMGADITPTEDGLIIRGKTPLHAANVTSYGDHRIGMMLQIAALLVEEGDVELERPEAVSVSYPTFFEDIRSLLK</sequence>
<keyword id="KW-0028">Amino-acid biosynthesis</keyword>
<keyword id="KW-0057">Aromatic amino acid biosynthesis</keyword>
<keyword id="KW-0963">Cytoplasm</keyword>
<keyword id="KW-0808">Transferase</keyword>
<comment type="function">
    <text evidence="1">Catalyzes the transfer of the enolpyruvyl moiety of phosphoenolpyruvate (PEP) to the 5-hydroxyl of shikimate-3-phosphate (S3P) to produce enolpyruvyl shikimate-3-phosphate and inorganic phosphate.</text>
</comment>
<comment type="catalytic activity">
    <reaction evidence="1">
        <text>3-phosphoshikimate + phosphoenolpyruvate = 5-O-(1-carboxyvinyl)-3-phosphoshikimate + phosphate</text>
        <dbReference type="Rhea" id="RHEA:21256"/>
        <dbReference type="ChEBI" id="CHEBI:43474"/>
        <dbReference type="ChEBI" id="CHEBI:57701"/>
        <dbReference type="ChEBI" id="CHEBI:58702"/>
        <dbReference type="ChEBI" id="CHEBI:145989"/>
        <dbReference type="EC" id="2.5.1.19"/>
    </reaction>
    <physiologicalReaction direction="left-to-right" evidence="1">
        <dbReference type="Rhea" id="RHEA:21257"/>
    </physiologicalReaction>
</comment>
<comment type="pathway">
    <text evidence="1">Metabolic intermediate biosynthesis; chorismate biosynthesis; chorismate from D-erythrose 4-phosphate and phosphoenolpyruvate: step 6/7.</text>
</comment>
<comment type="subunit">
    <text evidence="1">Monomer.</text>
</comment>
<comment type="subcellular location">
    <subcellularLocation>
        <location evidence="1">Cytoplasm</location>
    </subcellularLocation>
</comment>
<comment type="similarity">
    <text evidence="1">Belongs to the EPSP synthase family.</text>
</comment>